<evidence type="ECO:0000255" key="1">
    <source>
        <dbReference type="HAMAP-Rule" id="MF_00772"/>
    </source>
</evidence>
<feature type="chain" id="PRO_1000017350" description="Methylated-DNA--protein-cysteine methyltransferase">
    <location>
        <begin position="1"/>
        <end position="158"/>
    </location>
</feature>
<feature type="active site" description="Nucleophile; methyl group acceptor" evidence="1">
    <location>
        <position position="126"/>
    </location>
</feature>
<comment type="function">
    <text evidence="1">Involved in the cellular defense against the biological effects of O6-methylguanine (O6-MeG) and O4-methylthymine (O4-MeT) in DNA. Repairs the methylated nucleobase in DNA by stoichiometrically transferring the methyl group to a cysteine residue in the enzyme. This is a suicide reaction: the enzyme is irreversibly inactivated.</text>
</comment>
<comment type="catalytic activity">
    <reaction evidence="1">
        <text>a 6-O-methyl-2'-deoxyguanosine in DNA + L-cysteinyl-[protein] = S-methyl-L-cysteinyl-[protein] + a 2'-deoxyguanosine in DNA</text>
        <dbReference type="Rhea" id="RHEA:24000"/>
        <dbReference type="Rhea" id="RHEA-COMP:10131"/>
        <dbReference type="Rhea" id="RHEA-COMP:10132"/>
        <dbReference type="Rhea" id="RHEA-COMP:11367"/>
        <dbReference type="Rhea" id="RHEA-COMP:11368"/>
        <dbReference type="ChEBI" id="CHEBI:29950"/>
        <dbReference type="ChEBI" id="CHEBI:82612"/>
        <dbReference type="ChEBI" id="CHEBI:85445"/>
        <dbReference type="ChEBI" id="CHEBI:85448"/>
        <dbReference type="EC" id="2.1.1.63"/>
    </reaction>
</comment>
<comment type="catalytic activity">
    <reaction evidence="1">
        <text>a 4-O-methyl-thymidine in DNA + L-cysteinyl-[protein] = a thymidine in DNA + S-methyl-L-cysteinyl-[protein]</text>
        <dbReference type="Rhea" id="RHEA:53428"/>
        <dbReference type="Rhea" id="RHEA-COMP:10131"/>
        <dbReference type="Rhea" id="RHEA-COMP:10132"/>
        <dbReference type="Rhea" id="RHEA-COMP:13555"/>
        <dbReference type="Rhea" id="RHEA-COMP:13556"/>
        <dbReference type="ChEBI" id="CHEBI:29950"/>
        <dbReference type="ChEBI" id="CHEBI:82612"/>
        <dbReference type="ChEBI" id="CHEBI:137386"/>
        <dbReference type="ChEBI" id="CHEBI:137387"/>
        <dbReference type="EC" id="2.1.1.63"/>
    </reaction>
</comment>
<comment type="subcellular location">
    <subcellularLocation>
        <location evidence="1">Cytoplasm</location>
    </subcellularLocation>
</comment>
<comment type="miscellaneous">
    <text>This enzyme catalyzes only one turnover and therefore is not strictly catalytic. According to one definition, an enzyme is a biocatalyst that acts repeatedly and over many reaction cycles.</text>
</comment>
<comment type="similarity">
    <text evidence="1">Belongs to the MGMT family.</text>
</comment>
<gene>
    <name evidence="1" type="primary">ogt</name>
    <name type="ordered locus">Mbar_A0598</name>
</gene>
<organism>
    <name type="scientific">Methanosarcina barkeri (strain Fusaro / DSM 804)</name>
    <dbReference type="NCBI Taxonomy" id="269797"/>
    <lineage>
        <taxon>Archaea</taxon>
        <taxon>Methanobacteriati</taxon>
        <taxon>Methanobacteriota</taxon>
        <taxon>Stenosarchaea group</taxon>
        <taxon>Methanomicrobia</taxon>
        <taxon>Methanosarcinales</taxon>
        <taxon>Methanosarcinaceae</taxon>
        <taxon>Methanosarcina</taxon>
    </lineage>
</organism>
<accession>Q46EW4</accession>
<sequence>MYYDIIESPIGPILLAGNEKGLKHLDFLKGKKRIEIPADWIENKKFFREAARQLEAYFSGKLESFDLKLAPEGTDFQKSVWKALCEIPYGETRTYKEIAVSIGKPRAYRAVGLANNRNPIAIIIPCHRVIGSDGKLTGYASGLDIKEFLLKLEENNLR</sequence>
<reference key="1">
    <citation type="journal article" date="2006" name="J. Bacteriol.">
        <title>The Methanosarcina barkeri genome: comparative analysis with Methanosarcina acetivorans and Methanosarcina mazei reveals extensive rearrangement within methanosarcinal genomes.</title>
        <authorList>
            <person name="Maeder D.L."/>
            <person name="Anderson I."/>
            <person name="Brettin T.S."/>
            <person name="Bruce D.C."/>
            <person name="Gilna P."/>
            <person name="Han C.S."/>
            <person name="Lapidus A."/>
            <person name="Metcalf W.W."/>
            <person name="Saunders E."/>
            <person name="Tapia R."/>
            <person name="Sowers K.R."/>
        </authorList>
    </citation>
    <scope>NUCLEOTIDE SEQUENCE [LARGE SCALE GENOMIC DNA]</scope>
    <source>
        <strain>Fusaro / DSM 804</strain>
    </source>
</reference>
<proteinExistence type="inferred from homology"/>
<dbReference type="EC" id="2.1.1.63" evidence="1"/>
<dbReference type="EMBL" id="CP000099">
    <property type="protein sequence ID" value="AAZ69578.1"/>
    <property type="molecule type" value="Genomic_DNA"/>
</dbReference>
<dbReference type="SMR" id="Q46EW4"/>
<dbReference type="STRING" id="269797.Mbar_A0598"/>
<dbReference type="PaxDb" id="269797-Mbar_A0598"/>
<dbReference type="KEGG" id="mba:Mbar_A0598"/>
<dbReference type="eggNOG" id="arCOG02724">
    <property type="taxonomic scope" value="Archaea"/>
</dbReference>
<dbReference type="HOGENOM" id="CLU_000445_52_2_2"/>
<dbReference type="OrthoDB" id="372118at2157"/>
<dbReference type="GO" id="GO:0005737">
    <property type="term" value="C:cytoplasm"/>
    <property type="evidence" value="ECO:0007669"/>
    <property type="project" value="UniProtKB-SubCell"/>
</dbReference>
<dbReference type="GO" id="GO:0003908">
    <property type="term" value="F:methylated-DNA-[protein]-cysteine S-methyltransferase activity"/>
    <property type="evidence" value="ECO:0007669"/>
    <property type="project" value="UniProtKB-UniRule"/>
</dbReference>
<dbReference type="GO" id="GO:0006307">
    <property type="term" value="P:DNA alkylation repair"/>
    <property type="evidence" value="ECO:0007669"/>
    <property type="project" value="UniProtKB-UniRule"/>
</dbReference>
<dbReference type="GO" id="GO:0032259">
    <property type="term" value="P:methylation"/>
    <property type="evidence" value="ECO:0007669"/>
    <property type="project" value="UniProtKB-KW"/>
</dbReference>
<dbReference type="CDD" id="cd06445">
    <property type="entry name" value="ATase"/>
    <property type="match status" value="1"/>
</dbReference>
<dbReference type="FunFam" id="1.10.10.10:FF:000214">
    <property type="entry name" value="Methylated-DNA--protein-cysteine methyltransferase"/>
    <property type="match status" value="1"/>
</dbReference>
<dbReference type="Gene3D" id="3.30.160.70">
    <property type="entry name" value="Methylated DNA-protein cysteine methyltransferase domain"/>
    <property type="match status" value="1"/>
</dbReference>
<dbReference type="Gene3D" id="1.10.10.10">
    <property type="entry name" value="Winged helix-like DNA-binding domain superfamily/Winged helix DNA-binding domain"/>
    <property type="match status" value="1"/>
</dbReference>
<dbReference type="HAMAP" id="MF_00772">
    <property type="entry name" value="OGT"/>
    <property type="match status" value="1"/>
</dbReference>
<dbReference type="InterPro" id="IPR001497">
    <property type="entry name" value="MethylDNA_cys_MeTrfase_AS"/>
</dbReference>
<dbReference type="InterPro" id="IPR014048">
    <property type="entry name" value="MethylDNA_cys_MeTrfase_DNA-bd"/>
</dbReference>
<dbReference type="InterPro" id="IPR036217">
    <property type="entry name" value="MethylDNA_cys_MeTrfase_DNAb"/>
</dbReference>
<dbReference type="InterPro" id="IPR008332">
    <property type="entry name" value="MethylG_MeTrfase_N"/>
</dbReference>
<dbReference type="InterPro" id="IPR023546">
    <property type="entry name" value="MGMT"/>
</dbReference>
<dbReference type="InterPro" id="IPR036631">
    <property type="entry name" value="MGMT_N_sf"/>
</dbReference>
<dbReference type="InterPro" id="IPR036388">
    <property type="entry name" value="WH-like_DNA-bd_sf"/>
</dbReference>
<dbReference type="NCBIfam" id="TIGR00589">
    <property type="entry name" value="ogt"/>
    <property type="match status" value="1"/>
</dbReference>
<dbReference type="PANTHER" id="PTHR10815">
    <property type="entry name" value="METHYLATED-DNA--PROTEIN-CYSTEINE METHYLTRANSFERASE"/>
    <property type="match status" value="1"/>
</dbReference>
<dbReference type="PANTHER" id="PTHR10815:SF5">
    <property type="entry name" value="METHYLATED-DNA--PROTEIN-CYSTEINE METHYLTRANSFERASE"/>
    <property type="match status" value="1"/>
</dbReference>
<dbReference type="Pfam" id="PF01035">
    <property type="entry name" value="DNA_binding_1"/>
    <property type="match status" value="1"/>
</dbReference>
<dbReference type="Pfam" id="PF02870">
    <property type="entry name" value="Methyltransf_1N"/>
    <property type="match status" value="1"/>
</dbReference>
<dbReference type="SUPFAM" id="SSF53155">
    <property type="entry name" value="Methylated DNA-protein cysteine methyltransferase domain"/>
    <property type="match status" value="1"/>
</dbReference>
<dbReference type="SUPFAM" id="SSF46767">
    <property type="entry name" value="Methylated DNA-protein cysteine methyltransferase, C-terminal domain"/>
    <property type="match status" value="1"/>
</dbReference>
<dbReference type="PROSITE" id="PS00374">
    <property type="entry name" value="MGMT"/>
    <property type="match status" value="1"/>
</dbReference>
<name>OGT_METBF</name>
<keyword id="KW-0963">Cytoplasm</keyword>
<keyword id="KW-0227">DNA damage</keyword>
<keyword id="KW-0234">DNA repair</keyword>
<keyword id="KW-0489">Methyltransferase</keyword>
<keyword id="KW-0808">Transferase</keyword>
<protein>
    <recommendedName>
        <fullName evidence="1">Methylated-DNA--protein-cysteine methyltransferase</fullName>
        <ecNumber evidence="1">2.1.1.63</ecNumber>
    </recommendedName>
    <alternativeName>
        <fullName evidence="1">6-O-methylguanine-DNA methyltransferase</fullName>
        <shortName evidence="1">MGMT</shortName>
    </alternativeName>
    <alternativeName>
        <fullName evidence="1">O-6-methylguanine-DNA-alkyltransferase</fullName>
    </alternativeName>
</protein>